<protein>
    <recommendedName>
        <fullName evidence="5">Solute carrier family 66 member 2</fullName>
    </recommendedName>
    <alternativeName>
        <fullName>PQ-loop repeat-containing protein 1</fullName>
    </alternativeName>
</protein>
<organism>
    <name type="scientific">Homo sapiens</name>
    <name type="common">Human</name>
    <dbReference type="NCBI Taxonomy" id="9606"/>
    <lineage>
        <taxon>Eukaryota</taxon>
        <taxon>Metazoa</taxon>
        <taxon>Chordata</taxon>
        <taxon>Craniata</taxon>
        <taxon>Vertebrata</taxon>
        <taxon>Euteleostomi</taxon>
        <taxon>Mammalia</taxon>
        <taxon>Eutheria</taxon>
        <taxon>Euarchontoglires</taxon>
        <taxon>Primates</taxon>
        <taxon>Haplorrhini</taxon>
        <taxon>Catarrhini</taxon>
        <taxon>Hominidae</taxon>
        <taxon>Homo</taxon>
    </lineage>
</organism>
<reference key="1">
    <citation type="journal article" date="2004" name="Nat. Genet.">
        <title>Complete sequencing and characterization of 21,243 full-length human cDNAs.</title>
        <authorList>
            <person name="Ota T."/>
            <person name="Suzuki Y."/>
            <person name="Nishikawa T."/>
            <person name="Otsuki T."/>
            <person name="Sugiyama T."/>
            <person name="Irie R."/>
            <person name="Wakamatsu A."/>
            <person name="Hayashi K."/>
            <person name="Sato H."/>
            <person name="Nagai K."/>
            <person name="Kimura K."/>
            <person name="Makita H."/>
            <person name="Sekine M."/>
            <person name="Obayashi M."/>
            <person name="Nishi T."/>
            <person name="Shibahara T."/>
            <person name="Tanaka T."/>
            <person name="Ishii S."/>
            <person name="Yamamoto J."/>
            <person name="Saito K."/>
            <person name="Kawai Y."/>
            <person name="Isono Y."/>
            <person name="Nakamura Y."/>
            <person name="Nagahari K."/>
            <person name="Murakami K."/>
            <person name="Yasuda T."/>
            <person name="Iwayanagi T."/>
            <person name="Wagatsuma M."/>
            <person name="Shiratori A."/>
            <person name="Sudo H."/>
            <person name="Hosoiri T."/>
            <person name="Kaku Y."/>
            <person name="Kodaira H."/>
            <person name="Kondo H."/>
            <person name="Sugawara M."/>
            <person name="Takahashi M."/>
            <person name="Kanda K."/>
            <person name="Yokoi T."/>
            <person name="Furuya T."/>
            <person name="Kikkawa E."/>
            <person name="Omura Y."/>
            <person name="Abe K."/>
            <person name="Kamihara K."/>
            <person name="Katsuta N."/>
            <person name="Sato K."/>
            <person name="Tanikawa M."/>
            <person name="Yamazaki M."/>
            <person name="Ninomiya K."/>
            <person name="Ishibashi T."/>
            <person name="Yamashita H."/>
            <person name="Murakawa K."/>
            <person name="Fujimori K."/>
            <person name="Tanai H."/>
            <person name="Kimata M."/>
            <person name="Watanabe M."/>
            <person name="Hiraoka S."/>
            <person name="Chiba Y."/>
            <person name="Ishida S."/>
            <person name="Ono Y."/>
            <person name="Takiguchi S."/>
            <person name="Watanabe S."/>
            <person name="Yosida M."/>
            <person name="Hotuta T."/>
            <person name="Kusano J."/>
            <person name="Kanehori K."/>
            <person name="Takahashi-Fujii A."/>
            <person name="Hara H."/>
            <person name="Tanase T.-O."/>
            <person name="Nomura Y."/>
            <person name="Togiya S."/>
            <person name="Komai F."/>
            <person name="Hara R."/>
            <person name="Takeuchi K."/>
            <person name="Arita M."/>
            <person name="Imose N."/>
            <person name="Musashino K."/>
            <person name="Yuuki H."/>
            <person name="Oshima A."/>
            <person name="Sasaki N."/>
            <person name="Aotsuka S."/>
            <person name="Yoshikawa Y."/>
            <person name="Matsunawa H."/>
            <person name="Ichihara T."/>
            <person name="Shiohata N."/>
            <person name="Sano S."/>
            <person name="Moriya S."/>
            <person name="Momiyama H."/>
            <person name="Satoh N."/>
            <person name="Takami S."/>
            <person name="Terashima Y."/>
            <person name="Suzuki O."/>
            <person name="Nakagawa S."/>
            <person name="Senoh A."/>
            <person name="Mizoguchi H."/>
            <person name="Goto Y."/>
            <person name="Shimizu F."/>
            <person name="Wakebe H."/>
            <person name="Hishigaki H."/>
            <person name="Watanabe T."/>
            <person name="Sugiyama A."/>
            <person name="Takemoto M."/>
            <person name="Kawakami B."/>
            <person name="Yamazaki M."/>
            <person name="Watanabe K."/>
            <person name="Kumagai A."/>
            <person name="Itakura S."/>
            <person name="Fukuzumi Y."/>
            <person name="Fujimori Y."/>
            <person name="Komiyama M."/>
            <person name="Tashiro H."/>
            <person name="Tanigami A."/>
            <person name="Fujiwara T."/>
            <person name="Ono T."/>
            <person name="Yamada K."/>
            <person name="Fujii Y."/>
            <person name="Ozaki K."/>
            <person name="Hirao M."/>
            <person name="Ohmori Y."/>
            <person name="Kawabata A."/>
            <person name="Hikiji T."/>
            <person name="Kobatake N."/>
            <person name="Inagaki H."/>
            <person name="Ikema Y."/>
            <person name="Okamoto S."/>
            <person name="Okitani R."/>
            <person name="Kawakami T."/>
            <person name="Noguchi S."/>
            <person name="Itoh T."/>
            <person name="Shigeta K."/>
            <person name="Senba T."/>
            <person name="Matsumura K."/>
            <person name="Nakajima Y."/>
            <person name="Mizuno T."/>
            <person name="Morinaga M."/>
            <person name="Sasaki M."/>
            <person name="Togashi T."/>
            <person name="Oyama M."/>
            <person name="Hata H."/>
            <person name="Watanabe M."/>
            <person name="Komatsu T."/>
            <person name="Mizushima-Sugano J."/>
            <person name="Satoh T."/>
            <person name="Shirai Y."/>
            <person name="Takahashi Y."/>
            <person name="Nakagawa K."/>
            <person name="Okumura K."/>
            <person name="Nagase T."/>
            <person name="Nomura N."/>
            <person name="Kikuchi H."/>
            <person name="Masuho Y."/>
            <person name="Yamashita R."/>
            <person name="Nakai K."/>
            <person name="Yada T."/>
            <person name="Nakamura Y."/>
            <person name="Ohara O."/>
            <person name="Isogai T."/>
            <person name="Sugano S."/>
        </authorList>
    </citation>
    <scope>NUCLEOTIDE SEQUENCE [LARGE SCALE MRNA] (ISOFORM 3)</scope>
    <scope>NUCLEOTIDE SEQUENCE [LARGE SCALE MRNA] OF 67-271 (ISOFORM 2)</scope>
    <source>
        <tissue>Kidney</tissue>
        <tissue>Testis</tissue>
    </source>
</reference>
<reference key="2">
    <citation type="journal article" date="2005" name="Nature">
        <title>DNA sequence and analysis of human chromosome 18.</title>
        <authorList>
            <person name="Nusbaum C."/>
            <person name="Zody M.C."/>
            <person name="Borowsky M.L."/>
            <person name="Kamal M."/>
            <person name="Kodira C.D."/>
            <person name="Taylor T.D."/>
            <person name="Whittaker C.A."/>
            <person name="Chang J.L."/>
            <person name="Cuomo C.A."/>
            <person name="Dewar K."/>
            <person name="FitzGerald M.G."/>
            <person name="Yang X."/>
            <person name="Abouelleil A."/>
            <person name="Allen N.R."/>
            <person name="Anderson S."/>
            <person name="Bloom T."/>
            <person name="Bugalter B."/>
            <person name="Butler J."/>
            <person name="Cook A."/>
            <person name="DeCaprio D."/>
            <person name="Engels R."/>
            <person name="Garber M."/>
            <person name="Gnirke A."/>
            <person name="Hafez N."/>
            <person name="Hall J.L."/>
            <person name="Norman C.H."/>
            <person name="Itoh T."/>
            <person name="Jaffe D.B."/>
            <person name="Kuroki Y."/>
            <person name="Lehoczky J."/>
            <person name="Lui A."/>
            <person name="Macdonald P."/>
            <person name="Mauceli E."/>
            <person name="Mikkelsen T.S."/>
            <person name="Naylor J.W."/>
            <person name="Nicol R."/>
            <person name="Nguyen C."/>
            <person name="Noguchi H."/>
            <person name="O'Leary S.B."/>
            <person name="Piqani B."/>
            <person name="Smith C.L."/>
            <person name="Talamas J.A."/>
            <person name="Topham K."/>
            <person name="Totoki Y."/>
            <person name="Toyoda A."/>
            <person name="Wain H.M."/>
            <person name="Young S.K."/>
            <person name="Zeng Q."/>
            <person name="Zimmer A.R."/>
            <person name="Fujiyama A."/>
            <person name="Hattori M."/>
            <person name="Birren B.W."/>
            <person name="Sakaki Y."/>
            <person name="Lander E.S."/>
        </authorList>
    </citation>
    <scope>NUCLEOTIDE SEQUENCE [LARGE SCALE GENOMIC DNA]</scope>
</reference>
<reference key="3">
    <citation type="submission" date="2005-07" db="EMBL/GenBank/DDBJ databases">
        <authorList>
            <person name="Mural R.J."/>
            <person name="Istrail S."/>
            <person name="Sutton G.G."/>
            <person name="Florea L."/>
            <person name="Halpern A.L."/>
            <person name="Mobarry C.M."/>
            <person name="Lippert R."/>
            <person name="Walenz B."/>
            <person name="Shatkay H."/>
            <person name="Dew I."/>
            <person name="Miller J.R."/>
            <person name="Flanigan M.J."/>
            <person name="Edwards N.J."/>
            <person name="Bolanos R."/>
            <person name="Fasulo D."/>
            <person name="Halldorsson B.V."/>
            <person name="Hannenhalli S."/>
            <person name="Turner R."/>
            <person name="Yooseph S."/>
            <person name="Lu F."/>
            <person name="Nusskern D.R."/>
            <person name="Shue B.C."/>
            <person name="Zheng X.H."/>
            <person name="Zhong F."/>
            <person name="Delcher A.L."/>
            <person name="Huson D.H."/>
            <person name="Kravitz S.A."/>
            <person name="Mouchard L."/>
            <person name="Reinert K."/>
            <person name="Remington K.A."/>
            <person name="Clark A.G."/>
            <person name="Waterman M.S."/>
            <person name="Eichler E.E."/>
            <person name="Adams M.D."/>
            <person name="Hunkapiller M.W."/>
            <person name="Myers E.W."/>
            <person name="Venter J.C."/>
        </authorList>
    </citation>
    <scope>NUCLEOTIDE SEQUENCE [LARGE SCALE GENOMIC DNA]</scope>
</reference>
<reference key="4">
    <citation type="journal article" date="2004" name="Genome Res.">
        <title>The status, quality, and expansion of the NIH full-length cDNA project: the Mammalian Gene Collection (MGC).</title>
        <authorList>
            <consortium name="The MGC Project Team"/>
        </authorList>
    </citation>
    <scope>NUCLEOTIDE SEQUENCE [LARGE SCALE MRNA] (ISOFORM 1)</scope>
    <source>
        <tissue>Brain</tissue>
    </source>
</reference>
<reference key="5">
    <citation type="journal article" date="2014" name="J. Proteomics">
        <title>An enzyme assisted RP-RPLC approach for in-depth analysis of human liver phosphoproteome.</title>
        <authorList>
            <person name="Bian Y."/>
            <person name="Song C."/>
            <person name="Cheng K."/>
            <person name="Dong M."/>
            <person name="Wang F."/>
            <person name="Huang J."/>
            <person name="Sun D."/>
            <person name="Wang L."/>
            <person name="Ye M."/>
            <person name="Zou H."/>
        </authorList>
    </citation>
    <scope>IDENTIFICATION BY MASS SPECTROMETRY [LARGE SCALE ANALYSIS]</scope>
    <source>
        <tissue>Liver</tissue>
    </source>
</reference>
<reference key="6">
    <citation type="journal article" date="2006" name="Science">
        <title>The consensus coding sequences of human breast and colorectal cancers.</title>
        <authorList>
            <person name="Sjoeblom T."/>
            <person name="Jones S."/>
            <person name="Wood L.D."/>
            <person name="Parsons D.W."/>
            <person name="Lin J."/>
            <person name="Barber T.D."/>
            <person name="Mandelker D."/>
            <person name="Leary R.J."/>
            <person name="Ptak J."/>
            <person name="Silliman N."/>
            <person name="Szabo S."/>
            <person name="Buckhaults P."/>
            <person name="Farrell C."/>
            <person name="Meeh P."/>
            <person name="Markowitz S.D."/>
            <person name="Willis J."/>
            <person name="Dawson D."/>
            <person name="Willson J.K.V."/>
            <person name="Gazdar A.F."/>
            <person name="Hartigan J."/>
            <person name="Wu L."/>
            <person name="Liu C."/>
            <person name="Parmigiani G."/>
            <person name="Park B.H."/>
            <person name="Bachman K.E."/>
            <person name="Papadopoulos N."/>
            <person name="Vogelstein B."/>
            <person name="Kinzler K.W."/>
            <person name="Velculescu V.E."/>
        </authorList>
    </citation>
    <scope>VARIANT [LARGE SCALE ANALYSIS] ALA-175</scope>
</reference>
<gene>
    <name evidence="6" type="primary">SLC66A2</name>
    <name evidence="5" type="synonym">PQLC1</name>
</gene>
<dbReference type="EMBL" id="AK026031">
    <property type="protein sequence ID" value="BAB15329.1"/>
    <property type="status" value="ALT_INIT"/>
    <property type="molecule type" value="mRNA"/>
</dbReference>
<dbReference type="EMBL" id="AK301881">
    <property type="protein sequence ID" value="BAH13575.1"/>
    <property type="molecule type" value="mRNA"/>
</dbReference>
<dbReference type="EMBL" id="AC114341">
    <property type="status" value="NOT_ANNOTATED_CDS"/>
    <property type="molecule type" value="Genomic_DNA"/>
</dbReference>
<dbReference type="EMBL" id="CH471117">
    <property type="protein sequence ID" value="EAW66636.1"/>
    <property type="molecule type" value="Genomic_DNA"/>
</dbReference>
<dbReference type="EMBL" id="BC030140">
    <property type="protein sequence ID" value="AAH30140.1"/>
    <property type="molecule type" value="mRNA"/>
</dbReference>
<dbReference type="CCDS" id="CCDS12020.1">
    <molecule id="Q8N2U9-1"/>
</dbReference>
<dbReference type="CCDS" id="CCDS54192.1">
    <molecule id="Q8N2U9-3"/>
</dbReference>
<dbReference type="CCDS" id="CCDS54193.1">
    <molecule id="Q8N2U9-2"/>
</dbReference>
<dbReference type="RefSeq" id="NP_001139815.1">
    <molecule id="Q8N2U9-3"/>
    <property type="nucleotide sequence ID" value="NM_001146343.2"/>
</dbReference>
<dbReference type="RefSeq" id="NP_001139817.1">
    <molecule id="Q8N2U9-2"/>
    <property type="nucleotide sequence ID" value="NM_001146345.2"/>
</dbReference>
<dbReference type="RefSeq" id="NP_079354.2">
    <molecule id="Q8N2U9-1"/>
    <property type="nucleotide sequence ID" value="NM_025078.4"/>
</dbReference>
<dbReference type="RefSeq" id="XP_047293786.1">
    <molecule id="Q8N2U9-1"/>
    <property type="nucleotide sequence ID" value="XM_047437830.1"/>
</dbReference>
<dbReference type="RefSeq" id="XP_047293787.1">
    <molecule id="Q8N2U9-2"/>
    <property type="nucleotide sequence ID" value="XM_047437831.1"/>
</dbReference>
<dbReference type="RefSeq" id="XP_047293793.1">
    <molecule id="Q8N2U9-3"/>
    <property type="nucleotide sequence ID" value="XM_047437837.1"/>
</dbReference>
<dbReference type="RefSeq" id="XP_054175126.1">
    <molecule id="Q8N2U9-1"/>
    <property type="nucleotide sequence ID" value="XM_054319151.1"/>
</dbReference>
<dbReference type="RefSeq" id="XP_054175127.1">
    <molecule id="Q8N2U9-2"/>
    <property type="nucleotide sequence ID" value="XM_054319152.1"/>
</dbReference>
<dbReference type="RefSeq" id="XP_054175137.1">
    <molecule id="Q8N2U9-3"/>
    <property type="nucleotide sequence ID" value="XM_054319162.1"/>
</dbReference>
<dbReference type="BioGRID" id="123140">
    <property type="interactions" value="31"/>
</dbReference>
<dbReference type="FunCoup" id="Q8N2U9">
    <property type="interactions" value="464"/>
</dbReference>
<dbReference type="IntAct" id="Q8N2U9">
    <property type="interactions" value="24"/>
</dbReference>
<dbReference type="STRING" id="9606.ENSP00000380880"/>
<dbReference type="TCDB" id="2.A.43.2.15">
    <property type="family name" value="the lysosomal cystine transporter (lct) family"/>
</dbReference>
<dbReference type="iPTMnet" id="Q8N2U9"/>
<dbReference type="PhosphoSitePlus" id="Q8N2U9"/>
<dbReference type="BioMuta" id="PQLC1"/>
<dbReference type="DMDM" id="74728728"/>
<dbReference type="jPOST" id="Q8N2U9"/>
<dbReference type="MassIVE" id="Q8N2U9"/>
<dbReference type="PaxDb" id="9606-ENSP00000380880"/>
<dbReference type="PeptideAtlas" id="Q8N2U9"/>
<dbReference type="ProteomicsDB" id="33867"/>
<dbReference type="ProteomicsDB" id="71736">
    <molecule id="Q8N2U9-1"/>
</dbReference>
<dbReference type="ProteomicsDB" id="71737">
    <molecule id="Q8N2U9-2"/>
</dbReference>
<dbReference type="ProteomicsDB" id="71738">
    <molecule id="Q8N2U9-3"/>
</dbReference>
<dbReference type="Pumba" id="Q8N2U9"/>
<dbReference type="Antibodypedia" id="23501">
    <property type="antibodies" value="76 antibodies from 15 providers"/>
</dbReference>
<dbReference type="DNASU" id="80148"/>
<dbReference type="Ensembl" id="ENST00000357575.8">
    <molecule id="Q8N2U9-2"/>
    <property type="protein sequence ID" value="ENSP00000350188.3"/>
    <property type="gene ID" value="ENSG00000122490.19"/>
</dbReference>
<dbReference type="Ensembl" id="ENST00000397778.7">
    <molecule id="Q8N2U9-1"/>
    <property type="protein sequence ID" value="ENSP00000380880.2"/>
    <property type="gene ID" value="ENSG00000122490.19"/>
</dbReference>
<dbReference type="Ensembl" id="ENST00000590381.5">
    <molecule id="Q8N2U9-3"/>
    <property type="protein sequence ID" value="ENSP00000465546.1"/>
    <property type="gene ID" value="ENSG00000122490.19"/>
</dbReference>
<dbReference type="GeneID" id="80148"/>
<dbReference type="KEGG" id="hsa:80148"/>
<dbReference type="MANE-Select" id="ENST00000397778.7">
    <property type="protein sequence ID" value="ENSP00000380880.2"/>
    <property type="RefSeq nucleotide sequence ID" value="NM_025078.5"/>
    <property type="RefSeq protein sequence ID" value="NP_079354.2"/>
</dbReference>
<dbReference type="UCSC" id="uc002lnk.3">
    <molecule id="Q8N2U9-1"/>
    <property type="organism name" value="human"/>
</dbReference>
<dbReference type="AGR" id="HGNC:26188"/>
<dbReference type="CTD" id="80148"/>
<dbReference type="DisGeNET" id="80148"/>
<dbReference type="GeneCards" id="SLC66A2"/>
<dbReference type="HGNC" id="HGNC:26188">
    <property type="gene designation" value="SLC66A2"/>
</dbReference>
<dbReference type="HPA" id="ENSG00000122490">
    <property type="expression patterns" value="Tissue enhanced (liver)"/>
</dbReference>
<dbReference type="neXtProt" id="NX_Q8N2U9"/>
<dbReference type="OpenTargets" id="ENSG00000122490"/>
<dbReference type="VEuPathDB" id="HostDB:ENSG00000122490"/>
<dbReference type="eggNOG" id="KOG2913">
    <property type="taxonomic scope" value="Eukaryota"/>
</dbReference>
<dbReference type="GeneTree" id="ENSGT00390000002381"/>
<dbReference type="HOGENOM" id="CLU_049047_2_0_1"/>
<dbReference type="InParanoid" id="Q8N2U9"/>
<dbReference type="OMA" id="FKMWFFF"/>
<dbReference type="OrthoDB" id="292213at2759"/>
<dbReference type="PAN-GO" id="Q8N2U9">
    <property type="GO annotations" value="4 GO annotations based on evolutionary models"/>
</dbReference>
<dbReference type="PhylomeDB" id="Q8N2U9"/>
<dbReference type="TreeFam" id="TF313072"/>
<dbReference type="PathwayCommons" id="Q8N2U9"/>
<dbReference type="SignaLink" id="Q8N2U9"/>
<dbReference type="BioGRID-ORCS" id="80148">
    <property type="hits" value="13 hits in 1153 CRISPR screens"/>
</dbReference>
<dbReference type="ChiTaRS" id="PQLC1">
    <property type="organism name" value="human"/>
</dbReference>
<dbReference type="GenomeRNAi" id="80148"/>
<dbReference type="Pharos" id="Q8N2U9">
    <property type="development level" value="Tdark"/>
</dbReference>
<dbReference type="PRO" id="PR:Q8N2U9"/>
<dbReference type="Proteomes" id="UP000005640">
    <property type="component" value="Chromosome 18"/>
</dbReference>
<dbReference type="RNAct" id="Q8N2U9">
    <property type="molecule type" value="protein"/>
</dbReference>
<dbReference type="Bgee" id="ENSG00000122490">
    <property type="expression patterns" value="Expressed in right lobe of liver and 187 other cell types or tissues"/>
</dbReference>
<dbReference type="ExpressionAtlas" id="Q8N2U9">
    <property type="expression patterns" value="baseline and differential"/>
</dbReference>
<dbReference type="GO" id="GO:0005829">
    <property type="term" value="C:cytosol"/>
    <property type="evidence" value="ECO:0007669"/>
    <property type="project" value="GOC"/>
</dbReference>
<dbReference type="GO" id="GO:0005768">
    <property type="term" value="C:endosome"/>
    <property type="evidence" value="ECO:0000318"/>
    <property type="project" value="GO_Central"/>
</dbReference>
<dbReference type="GO" id="GO:0016020">
    <property type="term" value="C:membrane"/>
    <property type="evidence" value="ECO:0007669"/>
    <property type="project" value="UniProtKB-SubCell"/>
</dbReference>
<dbReference type="GO" id="GO:0005802">
    <property type="term" value="C:trans-Golgi network"/>
    <property type="evidence" value="ECO:0000318"/>
    <property type="project" value="GO_Central"/>
</dbReference>
<dbReference type="GO" id="GO:0045332">
    <property type="term" value="P:phospholipid translocation"/>
    <property type="evidence" value="ECO:0000318"/>
    <property type="project" value="GO_Central"/>
</dbReference>
<dbReference type="GO" id="GO:0042147">
    <property type="term" value="P:retrograde transport, endosome to Golgi"/>
    <property type="evidence" value="ECO:0000318"/>
    <property type="project" value="GO_Central"/>
</dbReference>
<dbReference type="FunFam" id="1.20.1280.290:FF:000005">
    <property type="entry name" value="PQ-loop repeat-containing protein 1"/>
    <property type="match status" value="1"/>
</dbReference>
<dbReference type="FunFam" id="1.20.1280.290:FF:000008">
    <property type="entry name" value="PQ-loop repeat-containing protein 1"/>
    <property type="match status" value="1"/>
</dbReference>
<dbReference type="Gene3D" id="1.20.1280.290">
    <property type="match status" value="2"/>
</dbReference>
<dbReference type="InterPro" id="IPR006603">
    <property type="entry name" value="PQ-loop_rpt"/>
</dbReference>
<dbReference type="InterPro" id="IPR052241">
    <property type="entry name" value="SLC66/Scramblase_ANY1"/>
</dbReference>
<dbReference type="PANTHER" id="PTHR14856">
    <property type="entry name" value="PQ-LOOP REPEAT-CONTAINING PROTEIN 1-LIKE PROTEIN"/>
    <property type="match status" value="1"/>
</dbReference>
<dbReference type="PANTHER" id="PTHR14856:SF10">
    <property type="entry name" value="SOLUTE CARRIER FAMILY 66 MEMBER 2"/>
    <property type="match status" value="1"/>
</dbReference>
<dbReference type="Pfam" id="PF04193">
    <property type="entry name" value="PQ-loop"/>
    <property type="match status" value="2"/>
</dbReference>
<dbReference type="SMART" id="SM00679">
    <property type="entry name" value="CTNS"/>
    <property type="match status" value="2"/>
</dbReference>
<keyword id="KW-0025">Alternative splicing</keyword>
<keyword id="KW-0472">Membrane</keyword>
<keyword id="KW-0597">Phosphoprotein</keyword>
<keyword id="KW-1267">Proteomics identification</keyword>
<keyword id="KW-1185">Reference proteome</keyword>
<keyword id="KW-0677">Repeat</keyword>
<keyword id="KW-0812">Transmembrane</keyword>
<keyword id="KW-1133">Transmembrane helix</keyword>
<accession>Q8N2U9</accession>
<accession>B7Z7D9</accession>
<accession>G5E989</accession>
<accession>Q9H6D0</accession>
<comment type="interaction">
    <interactant intactId="EBI-3907610">
        <id>Q8N2U9</id>
    </interactant>
    <interactant intactId="EBI-13059134">
        <id>Q13520</id>
        <label>AQP6</label>
    </interactant>
    <organismsDiffer>false</organismsDiffer>
    <experiments>3</experiments>
</comment>
<comment type="interaction">
    <interactant intactId="EBI-3907610">
        <id>Q8N2U9</id>
    </interactant>
    <interactant intactId="EBI-19947314">
        <id>Q8NFU1</id>
        <label>BEST2</label>
    </interactant>
    <organismsDiffer>false</organismsDiffer>
    <experiments>3</experiments>
</comment>
<comment type="interaction">
    <interactant intactId="EBI-3907610">
        <id>Q8N2U9</id>
    </interactant>
    <interactant intactId="EBI-7797864">
        <id>P11912</id>
        <label>CD79A</label>
    </interactant>
    <organismsDiffer>false</organismsDiffer>
    <experiments>3</experiments>
</comment>
<comment type="interaction">
    <interactant intactId="EBI-3907610">
        <id>Q8N2U9</id>
    </interactant>
    <interactant intactId="EBI-4402346">
        <id>P51798</id>
        <label>CLCN7</label>
    </interactant>
    <organismsDiffer>false</organismsDiffer>
    <experiments>3</experiments>
</comment>
<comment type="interaction">
    <interactant intactId="EBI-3907610">
        <id>Q8N2U9</id>
    </interactant>
    <interactant intactId="EBI-517508">
        <id>Q9NR28</id>
        <label>DIABLO</label>
    </interactant>
    <organismsDiffer>false</organismsDiffer>
    <experiments>3</experiments>
</comment>
<comment type="interaction">
    <interactant intactId="EBI-3907610">
        <id>Q8N2U9</id>
    </interactant>
    <interactant intactId="EBI-11956479">
        <id>P23142-4</id>
        <label>FBLN1</label>
    </interactant>
    <organismsDiffer>false</organismsDiffer>
    <experiments>3</experiments>
</comment>
<comment type="interaction">
    <interactant intactId="EBI-3907610">
        <id>Q8N2U9</id>
    </interactant>
    <interactant intactId="EBI-714482">
        <id>Q9BWH2</id>
        <label>FUNDC2</label>
    </interactant>
    <organismsDiffer>false</organismsDiffer>
    <experiments>3</experiments>
</comment>
<comment type="interaction">
    <interactant intactId="EBI-3907610">
        <id>Q8N2U9</id>
    </interactant>
    <interactant intactId="EBI-17458373">
        <id>P48165</id>
        <label>GJA8</label>
    </interactant>
    <organismsDiffer>false</organismsDiffer>
    <experiments>3</experiments>
</comment>
<comment type="interaction">
    <interactant intactId="EBI-3907610">
        <id>Q8N2U9</id>
    </interactant>
    <interactant intactId="EBI-13345167">
        <id>Q8TDT2</id>
        <label>GPR152</label>
    </interactant>
    <organismsDiffer>false</organismsDiffer>
    <experiments>3</experiments>
</comment>
<comment type="interaction">
    <interactant intactId="EBI-3907610">
        <id>Q8N2U9</id>
    </interactant>
    <interactant intactId="EBI-1031656">
        <id>Q13651</id>
        <label>IL10RA</label>
    </interactant>
    <organismsDiffer>false</organismsDiffer>
    <experiments>3</experiments>
</comment>
<comment type="interaction">
    <interactant intactId="EBI-3907610">
        <id>Q8N2U9</id>
    </interactant>
    <interactant intactId="EBI-3934936">
        <id>O95279</id>
        <label>KCNK5</label>
    </interactant>
    <organismsDiffer>false</organismsDiffer>
    <experiments>3</experiments>
</comment>
<comment type="interaction">
    <interactant intactId="EBI-3907610">
        <id>Q8N2U9</id>
    </interactant>
    <interactant intactId="EBI-373355">
        <id>Q5SR56</id>
        <label>MFSD14B</label>
    </interactant>
    <organismsDiffer>false</organismsDiffer>
    <experiments>3</experiments>
</comment>
<comment type="interaction">
    <interactant intactId="EBI-3907610">
        <id>Q8N2U9</id>
    </interactant>
    <interactant intactId="EBI-12866138">
        <id>A0A0C4DFN3</id>
        <label>MGLL</label>
    </interactant>
    <organismsDiffer>false</organismsDiffer>
    <experiments>3</experiments>
</comment>
<comment type="interaction">
    <interactant intactId="EBI-3907610">
        <id>Q8N2U9</id>
    </interactant>
    <interactant intactId="EBI-9916444">
        <id>Q8TEB9</id>
        <label>RHBDD1</label>
    </interactant>
    <organismsDiffer>false</organismsDiffer>
    <experiments>3</experiments>
</comment>
<comment type="interaction">
    <interactant intactId="EBI-3907610">
        <id>Q8N2U9</id>
    </interactant>
    <interactant intactId="EBI-3923031">
        <id>Q14973</id>
        <label>SLC10A1</label>
    </interactant>
    <organismsDiffer>false</organismsDiffer>
    <experiments>3</experiments>
</comment>
<comment type="interaction">
    <interactant intactId="EBI-3907610">
        <id>Q8N2U9</id>
    </interactant>
    <interactant intactId="EBI-18159983">
        <id>Q3KNW5</id>
        <label>SLC10A6</label>
    </interactant>
    <organismsDiffer>false</organismsDiffer>
    <experiments>3</experiments>
</comment>
<comment type="interaction">
    <interactant intactId="EBI-3907610">
        <id>Q8N2U9</id>
    </interactant>
    <interactant intactId="EBI-10281975">
        <id>Q96AG3</id>
        <label>SLC25A46</label>
    </interactant>
    <organismsDiffer>false</organismsDiffer>
    <experiments>3</experiments>
</comment>
<comment type="interaction">
    <interactant intactId="EBI-3907610">
        <id>Q8N2U9</id>
    </interactant>
    <interactant intactId="EBI-13389236">
        <id>Q7Z769</id>
        <label>SLC35E3</label>
    </interactant>
    <organismsDiffer>false</organismsDiffer>
    <experiments>3</experiments>
</comment>
<comment type="interaction">
    <interactant intactId="EBI-3907610">
        <id>Q8N2U9</id>
    </interactant>
    <interactant intactId="EBI-2691717">
        <id>Q86Y82</id>
        <label>STX12</label>
    </interactant>
    <organismsDiffer>false</organismsDiffer>
    <experiments>3</experiments>
</comment>
<comment type="interaction">
    <interactant intactId="EBI-3907610">
        <id>Q8N2U9</id>
    </interactant>
    <interactant intactId="EBI-13076526">
        <id>Q2T9K0-2</id>
        <label>TMEM44</label>
    </interactant>
    <organismsDiffer>false</organismsDiffer>
    <experiments>3</experiments>
</comment>
<comment type="interaction">
    <interactant intactId="EBI-3907610">
        <id>Q8N2U9</id>
    </interactant>
    <interactant intactId="EBI-11742770">
        <id>Q96HE8</id>
        <label>TMEM80</label>
    </interactant>
    <organismsDiffer>false</organismsDiffer>
    <experiments>3</experiments>
</comment>
<comment type="interaction">
    <interactant intactId="EBI-3907610">
        <id>Q8N2U9</id>
    </interactant>
    <interactant intactId="EBI-3892947">
        <id>Q5T4F4</id>
        <label>ZFYVE27</label>
    </interactant>
    <organismsDiffer>false</organismsDiffer>
    <experiments>3</experiments>
</comment>
<comment type="subcellular location">
    <subcellularLocation>
        <location evidence="5">Membrane</location>
        <topology evidence="5">Multi-pass membrane protein</topology>
    </subcellularLocation>
</comment>
<comment type="alternative products">
    <event type="alternative splicing"/>
    <isoform>
        <id>Q8N2U9-1</id>
        <name>1</name>
        <sequence type="displayed"/>
    </isoform>
    <isoform>
        <id>Q8N2U9-2</id>
        <name>2</name>
        <sequence type="described" ref="VSP_024145"/>
    </isoform>
    <isoform>
        <id>Q8N2U9-3</id>
        <name>3</name>
        <sequence type="described" ref="VSP_043275 VSP_043276"/>
    </isoform>
</comment>
<comment type="sequence caution" evidence="5">
    <conflict type="erroneous initiation">
        <sequence resource="EMBL-CDS" id="BAB15329"/>
    </conflict>
    <text>Truncated N-terminus.</text>
</comment>
<feature type="chain" id="PRO_0000282430" description="Solute carrier family 66 member 2">
    <location>
        <begin position="1"/>
        <end position="271"/>
    </location>
</feature>
<feature type="transmembrane region" description="Helical" evidence="2">
    <location>
        <begin position="8"/>
        <end position="28"/>
    </location>
</feature>
<feature type="transmembrane region" description="Helical" evidence="2">
    <location>
        <begin position="49"/>
        <end position="69"/>
    </location>
</feature>
<feature type="transmembrane region" description="Helical" evidence="2">
    <location>
        <begin position="76"/>
        <end position="96"/>
    </location>
</feature>
<feature type="transmembrane region" description="Helical" evidence="2">
    <location>
        <begin position="145"/>
        <end position="165"/>
    </location>
</feature>
<feature type="transmembrane region" description="Helical" evidence="2">
    <location>
        <begin position="168"/>
        <end position="188"/>
    </location>
</feature>
<feature type="transmembrane region" description="Helical" evidence="2">
    <location>
        <begin position="232"/>
        <end position="252"/>
    </location>
</feature>
<feature type="domain" description="PQ-loop 1">
    <location>
        <begin position="14"/>
        <end position="80"/>
    </location>
</feature>
<feature type="domain" description="PQ-loop 2">
    <location>
        <begin position="178"/>
        <end position="233"/>
    </location>
</feature>
<feature type="modified residue" description="Phosphoserine" evidence="1">
    <location>
        <position position="110"/>
    </location>
</feature>
<feature type="splice variant" id="VSP_024145" description="In isoform 2." evidence="4">
    <location>
        <begin position="113"/>
        <end position="130"/>
    </location>
</feature>
<feature type="splice variant" id="VSP_043275" description="In isoform 3." evidence="4">
    <original>ADSKDEEVKVAPRRSFLDF</original>
    <variation>SRWCSCGPVVTPSRRPTSC</variation>
    <location>
        <begin position="114"/>
        <end position="132"/>
    </location>
</feature>
<feature type="splice variant" id="VSP_043276" description="In isoform 3." evidence="4">
    <location>
        <begin position="133"/>
        <end position="271"/>
    </location>
</feature>
<feature type="sequence variant" id="VAR_035979" description="In a colorectal cancer sample; somatic mutation." evidence="3">
    <original>G</original>
    <variation>A</variation>
    <location>
        <position position="175"/>
    </location>
</feature>
<name>S66A2_HUMAN</name>
<proteinExistence type="evidence at protein level"/>
<evidence type="ECO:0000250" key="1">
    <source>
        <dbReference type="UniProtKB" id="Q80XM9"/>
    </source>
</evidence>
<evidence type="ECO:0000255" key="2"/>
<evidence type="ECO:0000269" key="3">
    <source>
    </source>
</evidence>
<evidence type="ECO:0000303" key="4">
    <source>
    </source>
</evidence>
<evidence type="ECO:0000305" key="5"/>
<evidence type="ECO:0000312" key="6">
    <source>
        <dbReference type="HGNC" id="HGNC:26188"/>
    </source>
</evidence>
<sequence>MEAEGLDWLLVPLHQLVSWGAAAAMVFGGVVPYVPQYRDIRRTQNADGFSTYVCLVLLVANILRILFWFGRRFESPLLWQSAIMILTMLLMLKLCTEVRVANELNARRRSFTAADSKDEEVKVAPRRSFLDFDPHHFWQWSSFSDYVQCVLAFTGVAGYITYLSIDSALFVETLGFLAVLTEAMLGVPQLYRNHRHQSTEGMSIKMVLMWTSGDAFKTAYFLLKGAPLQFSVCGLLQVLVDLAILGQAYAFARHPQKPAPHAVHPTGTKAL</sequence>